<keyword id="KW-0028">Amino-acid biosynthesis</keyword>
<keyword id="KW-0055">Arginine biosynthesis</keyword>
<keyword id="KW-0170">Cobalt</keyword>
<keyword id="KW-0963">Cytoplasm</keyword>
<keyword id="KW-0378">Hydrolase</keyword>
<keyword id="KW-0479">Metal-binding</keyword>
<keyword id="KW-1185">Reference proteome</keyword>
<keyword id="KW-0862">Zinc</keyword>
<reference key="1">
    <citation type="journal article" date="2001" name="Nature">
        <title>Genome sequence of Yersinia pestis, the causative agent of plague.</title>
        <authorList>
            <person name="Parkhill J."/>
            <person name="Wren B.W."/>
            <person name="Thomson N.R."/>
            <person name="Titball R.W."/>
            <person name="Holden M.T.G."/>
            <person name="Prentice M.B."/>
            <person name="Sebaihia M."/>
            <person name="James K.D."/>
            <person name="Churcher C.M."/>
            <person name="Mungall K.L."/>
            <person name="Baker S."/>
            <person name="Basham D."/>
            <person name="Bentley S.D."/>
            <person name="Brooks K."/>
            <person name="Cerdeno-Tarraga A.-M."/>
            <person name="Chillingworth T."/>
            <person name="Cronin A."/>
            <person name="Davies R.M."/>
            <person name="Davis P."/>
            <person name="Dougan G."/>
            <person name="Feltwell T."/>
            <person name="Hamlin N."/>
            <person name="Holroyd S."/>
            <person name="Jagels K."/>
            <person name="Karlyshev A.V."/>
            <person name="Leather S."/>
            <person name="Moule S."/>
            <person name="Oyston P.C.F."/>
            <person name="Quail M.A."/>
            <person name="Rutherford K.M."/>
            <person name="Simmonds M."/>
            <person name="Skelton J."/>
            <person name="Stevens K."/>
            <person name="Whitehead S."/>
            <person name="Barrell B.G."/>
        </authorList>
    </citation>
    <scope>NUCLEOTIDE SEQUENCE [LARGE SCALE GENOMIC DNA]</scope>
    <source>
        <strain>CO-92 / Biovar Orientalis</strain>
    </source>
</reference>
<reference key="2">
    <citation type="journal article" date="2002" name="J. Bacteriol.">
        <title>Genome sequence of Yersinia pestis KIM.</title>
        <authorList>
            <person name="Deng W."/>
            <person name="Burland V."/>
            <person name="Plunkett G. III"/>
            <person name="Boutin A."/>
            <person name="Mayhew G.F."/>
            <person name="Liss P."/>
            <person name="Perna N.T."/>
            <person name="Rose D.J."/>
            <person name="Mau B."/>
            <person name="Zhou S."/>
            <person name="Schwartz D.C."/>
            <person name="Fetherston J.D."/>
            <person name="Lindler L.E."/>
            <person name="Brubaker R.R."/>
            <person name="Plano G.V."/>
            <person name="Straley S.C."/>
            <person name="McDonough K.A."/>
            <person name="Nilles M.L."/>
            <person name="Matson J.S."/>
            <person name="Blattner F.R."/>
            <person name="Perry R.D."/>
        </authorList>
    </citation>
    <scope>NUCLEOTIDE SEQUENCE [LARGE SCALE GENOMIC DNA]</scope>
    <source>
        <strain>KIM10+ / Biovar Mediaevalis</strain>
    </source>
</reference>
<reference key="3">
    <citation type="journal article" date="2004" name="DNA Res.">
        <title>Complete genome sequence of Yersinia pestis strain 91001, an isolate avirulent to humans.</title>
        <authorList>
            <person name="Song Y."/>
            <person name="Tong Z."/>
            <person name="Wang J."/>
            <person name="Wang L."/>
            <person name="Guo Z."/>
            <person name="Han Y."/>
            <person name="Zhang J."/>
            <person name="Pei D."/>
            <person name="Zhou D."/>
            <person name="Qin H."/>
            <person name="Pang X."/>
            <person name="Han Y."/>
            <person name="Zhai J."/>
            <person name="Li M."/>
            <person name="Cui B."/>
            <person name="Qi Z."/>
            <person name="Jin L."/>
            <person name="Dai R."/>
            <person name="Chen F."/>
            <person name="Li S."/>
            <person name="Ye C."/>
            <person name="Du Z."/>
            <person name="Lin W."/>
            <person name="Wang J."/>
            <person name="Yu J."/>
            <person name="Yang H."/>
            <person name="Wang J."/>
            <person name="Huang P."/>
            <person name="Yang R."/>
        </authorList>
    </citation>
    <scope>NUCLEOTIDE SEQUENCE [LARGE SCALE GENOMIC DNA]</scope>
    <source>
        <strain>91001 / Biovar Mediaevalis</strain>
    </source>
</reference>
<accession>Q8ZA85</accession>
<accession>Q0WA87</accession>
<gene>
    <name evidence="1" type="primary">argE</name>
    <name type="ordered locus">YPO3928</name>
    <name type="ordered locus">y0309</name>
    <name type="ordered locus">YP_3122</name>
</gene>
<sequence>MKMKLPPFIELYRALIATPSISAADSALDQSNEALINLLAGWFADLGFRVEIQPVPDTRHKFNLLASIGENENGEGHGGLLLAGHTDTVPYDEGRWTRDPFTLTEHDHKLYGLGTADMKGFFAFILDAVRDIDASKLTKPLYILATADEETTMAGARYFAANTQLRPDFAIIGEPTSLQPVRAHKGHISNAIRITGQSGHSSDPARGVNAIDLMHESITQLMALRTTLQERYHNPAFTIPYPTMNFGHINGGDAANRICACCELHMDIRPLPGLTLSDLNELMTEALEPVSQRWPGRLSIDELHPPIPGYECPTDHHMVGVIEKLLGERTAVVNYCTEAPFIQQVCPTLVLGPGSINQAHQPDEFIDMAFIEPTRELIGQLVDHFCQQK</sequence>
<organism>
    <name type="scientific">Yersinia pestis</name>
    <dbReference type="NCBI Taxonomy" id="632"/>
    <lineage>
        <taxon>Bacteria</taxon>
        <taxon>Pseudomonadati</taxon>
        <taxon>Pseudomonadota</taxon>
        <taxon>Gammaproteobacteria</taxon>
        <taxon>Enterobacterales</taxon>
        <taxon>Yersiniaceae</taxon>
        <taxon>Yersinia</taxon>
    </lineage>
</organism>
<feature type="chain" id="PRO_0000185255" description="Acetylornithine deacetylase">
    <location>
        <begin position="1"/>
        <end position="389"/>
    </location>
</feature>
<feature type="active site" evidence="1">
    <location>
        <position position="87"/>
    </location>
</feature>
<feature type="active site" evidence="1">
    <location>
        <position position="149"/>
    </location>
</feature>
<feature type="binding site" evidence="1">
    <location>
        <position position="85"/>
    </location>
    <ligand>
        <name>Zn(2+)</name>
        <dbReference type="ChEBI" id="CHEBI:29105"/>
        <label>1</label>
    </ligand>
</feature>
<feature type="binding site" evidence="1">
    <location>
        <position position="117"/>
    </location>
    <ligand>
        <name>Zn(2+)</name>
        <dbReference type="ChEBI" id="CHEBI:29105"/>
        <label>1</label>
    </ligand>
</feature>
<feature type="binding site" evidence="1">
    <location>
        <position position="117"/>
    </location>
    <ligand>
        <name>Zn(2+)</name>
        <dbReference type="ChEBI" id="CHEBI:29105"/>
        <label>2</label>
    </ligand>
</feature>
<feature type="binding site" evidence="1">
    <location>
        <position position="150"/>
    </location>
    <ligand>
        <name>Zn(2+)</name>
        <dbReference type="ChEBI" id="CHEBI:29105"/>
        <label>2</label>
    </ligand>
</feature>
<feature type="binding site" evidence="1">
    <location>
        <position position="174"/>
    </location>
    <ligand>
        <name>Zn(2+)</name>
        <dbReference type="ChEBI" id="CHEBI:29105"/>
        <label>1</label>
    </ligand>
</feature>
<feature type="binding site" evidence="1">
    <location>
        <position position="360"/>
    </location>
    <ligand>
        <name>Zn(2+)</name>
        <dbReference type="ChEBI" id="CHEBI:29105"/>
        <label>2</label>
    </ligand>
</feature>
<name>ARGE_YERPE</name>
<protein>
    <recommendedName>
        <fullName evidence="1">Acetylornithine deacetylase</fullName>
        <shortName evidence="1">AO</shortName>
        <shortName evidence="1">Acetylornithinase</shortName>
        <ecNumber evidence="1">3.5.1.16</ecNumber>
    </recommendedName>
    <alternativeName>
        <fullName evidence="1">N-acetylornithinase</fullName>
        <shortName evidence="1">NAO</shortName>
    </alternativeName>
</protein>
<dbReference type="EC" id="3.5.1.16" evidence="1"/>
<dbReference type="EMBL" id="AL590842">
    <property type="protein sequence ID" value="CAL22511.1"/>
    <property type="molecule type" value="Genomic_DNA"/>
</dbReference>
<dbReference type="EMBL" id="AE009952">
    <property type="protein sequence ID" value="AAM83900.1"/>
    <property type="molecule type" value="Genomic_DNA"/>
</dbReference>
<dbReference type="EMBL" id="AE017042">
    <property type="protein sequence ID" value="AAS63292.1"/>
    <property type="molecule type" value="Genomic_DNA"/>
</dbReference>
<dbReference type="PIR" id="AD0478">
    <property type="entry name" value="AD0478"/>
</dbReference>
<dbReference type="RefSeq" id="YP_002348801.1">
    <property type="nucleotide sequence ID" value="NC_003143.1"/>
</dbReference>
<dbReference type="SMR" id="Q8ZA85"/>
<dbReference type="IntAct" id="Q8ZA85">
    <property type="interactions" value="4"/>
</dbReference>
<dbReference type="STRING" id="214092.YPO3928"/>
<dbReference type="MEROPS" id="M20.974"/>
<dbReference type="PaxDb" id="214092-YPO3928"/>
<dbReference type="DNASU" id="1145256"/>
<dbReference type="EnsemblBacteria" id="AAS63292">
    <property type="protein sequence ID" value="AAS63292"/>
    <property type="gene ID" value="YP_3122"/>
</dbReference>
<dbReference type="KEGG" id="ype:YPO3928"/>
<dbReference type="KEGG" id="ypk:y0309"/>
<dbReference type="KEGG" id="ypm:YP_3122"/>
<dbReference type="PATRIC" id="fig|214092.21.peg.4456"/>
<dbReference type="eggNOG" id="COG0624">
    <property type="taxonomic scope" value="Bacteria"/>
</dbReference>
<dbReference type="HOGENOM" id="CLU_021802_2_4_6"/>
<dbReference type="OMA" id="RLHKGVM"/>
<dbReference type="OrthoDB" id="3665926at2"/>
<dbReference type="UniPathway" id="UPA00068">
    <property type="reaction ID" value="UER00110"/>
</dbReference>
<dbReference type="Proteomes" id="UP000000815">
    <property type="component" value="Chromosome"/>
</dbReference>
<dbReference type="Proteomes" id="UP000001019">
    <property type="component" value="Chromosome"/>
</dbReference>
<dbReference type="Proteomes" id="UP000002490">
    <property type="component" value="Chromosome"/>
</dbReference>
<dbReference type="GO" id="GO:0005737">
    <property type="term" value="C:cytoplasm"/>
    <property type="evidence" value="ECO:0007669"/>
    <property type="project" value="UniProtKB-SubCell"/>
</dbReference>
<dbReference type="GO" id="GO:0008777">
    <property type="term" value="F:acetylornithine deacetylase activity"/>
    <property type="evidence" value="ECO:0000318"/>
    <property type="project" value="GO_Central"/>
</dbReference>
<dbReference type="GO" id="GO:0008270">
    <property type="term" value="F:zinc ion binding"/>
    <property type="evidence" value="ECO:0007669"/>
    <property type="project" value="UniProtKB-UniRule"/>
</dbReference>
<dbReference type="GO" id="GO:0006526">
    <property type="term" value="P:L-arginine biosynthetic process"/>
    <property type="evidence" value="ECO:0000318"/>
    <property type="project" value="GO_Central"/>
</dbReference>
<dbReference type="CDD" id="cd03894">
    <property type="entry name" value="M20_ArgE"/>
    <property type="match status" value="1"/>
</dbReference>
<dbReference type="FunFam" id="3.30.70.360:FF:000003">
    <property type="entry name" value="Acetylornithine deacetylase"/>
    <property type="match status" value="1"/>
</dbReference>
<dbReference type="Gene3D" id="3.30.70.360">
    <property type="match status" value="1"/>
</dbReference>
<dbReference type="Gene3D" id="3.40.630.10">
    <property type="entry name" value="Zn peptidases"/>
    <property type="match status" value="1"/>
</dbReference>
<dbReference type="HAMAP" id="MF_01108">
    <property type="entry name" value="ArgE"/>
    <property type="match status" value="1"/>
</dbReference>
<dbReference type="InterPro" id="IPR010169">
    <property type="entry name" value="AcOrn-deacetyl"/>
</dbReference>
<dbReference type="InterPro" id="IPR001261">
    <property type="entry name" value="ArgE/DapE_CS"/>
</dbReference>
<dbReference type="InterPro" id="IPR036264">
    <property type="entry name" value="Bact_exopeptidase_dim_dom"/>
</dbReference>
<dbReference type="InterPro" id="IPR002933">
    <property type="entry name" value="Peptidase_M20"/>
</dbReference>
<dbReference type="InterPro" id="IPR011650">
    <property type="entry name" value="Peptidase_M20_dimer"/>
</dbReference>
<dbReference type="InterPro" id="IPR050072">
    <property type="entry name" value="Peptidase_M20A"/>
</dbReference>
<dbReference type="NCBIfam" id="TIGR01892">
    <property type="entry name" value="AcOrn-deacetyl"/>
    <property type="match status" value="1"/>
</dbReference>
<dbReference type="NCBIfam" id="NF003474">
    <property type="entry name" value="PRK05111.1"/>
    <property type="match status" value="1"/>
</dbReference>
<dbReference type="PANTHER" id="PTHR43808">
    <property type="entry name" value="ACETYLORNITHINE DEACETYLASE"/>
    <property type="match status" value="1"/>
</dbReference>
<dbReference type="PANTHER" id="PTHR43808:SF1">
    <property type="entry name" value="ACETYLORNITHINE DEACETYLASE"/>
    <property type="match status" value="1"/>
</dbReference>
<dbReference type="Pfam" id="PF07687">
    <property type="entry name" value="M20_dimer"/>
    <property type="match status" value="1"/>
</dbReference>
<dbReference type="Pfam" id="PF01546">
    <property type="entry name" value="Peptidase_M20"/>
    <property type="match status" value="1"/>
</dbReference>
<dbReference type="SUPFAM" id="SSF55031">
    <property type="entry name" value="Bacterial exopeptidase dimerisation domain"/>
    <property type="match status" value="1"/>
</dbReference>
<dbReference type="SUPFAM" id="SSF53187">
    <property type="entry name" value="Zn-dependent exopeptidases"/>
    <property type="match status" value="1"/>
</dbReference>
<dbReference type="PROSITE" id="PS00758">
    <property type="entry name" value="ARGE_DAPE_CPG2_1"/>
    <property type="match status" value="1"/>
</dbReference>
<dbReference type="PROSITE" id="PS00759">
    <property type="entry name" value="ARGE_DAPE_CPG2_2"/>
    <property type="match status" value="1"/>
</dbReference>
<proteinExistence type="inferred from homology"/>
<evidence type="ECO:0000255" key="1">
    <source>
        <dbReference type="HAMAP-Rule" id="MF_01108"/>
    </source>
</evidence>
<evidence type="ECO:0000305" key="2"/>
<comment type="function">
    <text evidence="1">Catalyzes the hydrolysis of the amide bond of N(2)-acetylated L-amino acids. Cleaves the acetyl group from N-acetyl-L-ornithine to form L-ornithine, an intermediate in L-arginine biosynthesis pathway, and a branchpoint in the synthesis of polyamines.</text>
</comment>
<comment type="catalytic activity">
    <reaction evidence="1">
        <text>N(2)-acetyl-L-ornithine + H2O = L-ornithine + acetate</text>
        <dbReference type="Rhea" id="RHEA:15941"/>
        <dbReference type="ChEBI" id="CHEBI:15377"/>
        <dbReference type="ChEBI" id="CHEBI:30089"/>
        <dbReference type="ChEBI" id="CHEBI:46911"/>
        <dbReference type="ChEBI" id="CHEBI:57805"/>
        <dbReference type="EC" id="3.5.1.16"/>
    </reaction>
</comment>
<comment type="cofactor">
    <cofactor evidence="1">
        <name>Zn(2+)</name>
        <dbReference type="ChEBI" id="CHEBI:29105"/>
    </cofactor>
    <cofactor evidence="1">
        <name>Co(2+)</name>
        <dbReference type="ChEBI" id="CHEBI:48828"/>
    </cofactor>
    <text evidence="1">Binds 2 Zn(2+) or Co(2+) ions per subunit.</text>
</comment>
<comment type="cofactor">
    <cofactor evidence="1">
        <name>glutathione</name>
        <dbReference type="ChEBI" id="CHEBI:57925"/>
    </cofactor>
</comment>
<comment type="pathway">
    <text evidence="1">Amino-acid biosynthesis; L-arginine biosynthesis; L-ornithine from N(2)-acetyl-L-ornithine (linear): step 1/1.</text>
</comment>
<comment type="subunit">
    <text evidence="1">Homodimer.</text>
</comment>
<comment type="subcellular location">
    <subcellularLocation>
        <location evidence="1">Cytoplasm</location>
    </subcellularLocation>
</comment>
<comment type="similarity">
    <text evidence="1 2">Belongs to the peptidase M20A family. ArgE subfamily.</text>
</comment>